<organism>
    <name type="scientific">Francisella tularensis subsp. holarctica (strain FTNF002-00 / FTA)</name>
    <dbReference type="NCBI Taxonomy" id="458234"/>
    <lineage>
        <taxon>Bacteria</taxon>
        <taxon>Pseudomonadati</taxon>
        <taxon>Pseudomonadota</taxon>
        <taxon>Gammaproteobacteria</taxon>
        <taxon>Thiotrichales</taxon>
        <taxon>Francisellaceae</taxon>
        <taxon>Francisella</taxon>
    </lineage>
</organism>
<dbReference type="EMBL" id="CP000803">
    <property type="protein sequence ID" value="ABU60479.2"/>
    <property type="molecule type" value="Genomic_DNA"/>
</dbReference>
<dbReference type="RefSeq" id="WP_011997492.1">
    <property type="nucleotide sequence ID" value="NC_009749.1"/>
</dbReference>
<dbReference type="SMR" id="A7N926"/>
<dbReference type="GeneID" id="75264486"/>
<dbReference type="KEGG" id="fta:FTA_0001"/>
<dbReference type="HOGENOM" id="CLU_026910_3_1_6"/>
<dbReference type="GO" id="GO:0005737">
    <property type="term" value="C:cytoplasm"/>
    <property type="evidence" value="ECO:0007669"/>
    <property type="project" value="UniProtKB-SubCell"/>
</dbReference>
<dbReference type="GO" id="GO:0005886">
    <property type="term" value="C:plasma membrane"/>
    <property type="evidence" value="ECO:0007669"/>
    <property type="project" value="TreeGrafter"/>
</dbReference>
<dbReference type="GO" id="GO:0005524">
    <property type="term" value="F:ATP binding"/>
    <property type="evidence" value="ECO:0007669"/>
    <property type="project" value="UniProtKB-UniRule"/>
</dbReference>
<dbReference type="GO" id="GO:0016887">
    <property type="term" value="F:ATP hydrolysis activity"/>
    <property type="evidence" value="ECO:0007669"/>
    <property type="project" value="InterPro"/>
</dbReference>
<dbReference type="GO" id="GO:0003688">
    <property type="term" value="F:DNA replication origin binding"/>
    <property type="evidence" value="ECO:0007669"/>
    <property type="project" value="UniProtKB-UniRule"/>
</dbReference>
<dbReference type="GO" id="GO:0008289">
    <property type="term" value="F:lipid binding"/>
    <property type="evidence" value="ECO:0007669"/>
    <property type="project" value="UniProtKB-KW"/>
</dbReference>
<dbReference type="GO" id="GO:0006270">
    <property type="term" value="P:DNA replication initiation"/>
    <property type="evidence" value="ECO:0007669"/>
    <property type="project" value="UniProtKB-UniRule"/>
</dbReference>
<dbReference type="GO" id="GO:0006275">
    <property type="term" value="P:regulation of DNA replication"/>
    <property type="evidence" value="ECO:0007669"/>
    <property type="project" value="UniProtKB-UniRule"/>
</dbReference>
<dbReference type="CDD" id="cd00009">
    <property type="entry name" value="AAA"/>
    <property type="match status" value="1"/>
</dbReference>
<dbReference type="CDD" id="cd06571">
    <property type="entry name" value="Bac_DnaA_C"/>
    <property type="match status" value="1"/>
</dbReference>
<dbReference type="FunFam" id="3.40.50.300:FF:000668">
    <property type="entry name" value="Chromosomal replication initiator protein DnaA"/>
    <property type="match status" value="1"/>
</dbReference>
<dbReference type="Gene3D" id="1.10.1750.10">
    <property type="match status" value="1"/>
</dbReference>
<dbReference type="Gene3D" id="1.10.8.60">
    <property type="match status" value="1"/>
</dbReference>
<dbReference type="Gene3D" id="3.30.300.180">
    <property type="match status" value="1"/>
</dbReference>
<dbReference type="Gene3D" id="3.40.50.300">
    <property type="entry name" value="P-loop containing nucleotide triphosphate hydrolases"/>
    <property type="match status" value="1"/>
</dbReference>
<dbReference type="HAMAP" id="MF_00377">
    <property type="entry name" value="DnaA_bact"/>
    <property type="match status" value="1"/>
</dbReference>
<dbReference type="InterPro" id="IPR003593">
    <property type="entry name" value="AAA+_ATPase"/>
</dbReference>
<dbReference type="InterPro" id="IPR001957">
    <property type="entry name" value="Chromosome_initiator_DnaA"/>
</dbReference>
<dbReference type="InterPro" id="IPR020591">
    <property type="entry name" value="Chromosome_initiator_DnaA-like"/>
</dbReference>
<dbReference type="InterPro" id="IPR018312">
    <property type="entry name" value="Chromosome_initiator_DnaA_CS"/>
</dbReference>
<dbReference type="InterPro" id="IPR013159">
    <property type="entry name" value="DnaA_C"/>
</dbReference>
<dbReference type="InterPro" id="IPR013317">
    <property type="entry name" value="DnaA_dom"/>
</dbReference>
<dbReference type="InterPro" id="IPR024633">
    <property type="entry name" value="DnaA_N_dom"/>
</dbReference>
<dbReference type="InterPro" id="IPR038454">
    <property type="entry name" value="DnaA_N_sf"/>
</dbReference>
<dbReference type="InterPro" id="IPR027417">
    <property type="entry name" value="P-loop_NTPase"/>
</dbReference>
<dbReference type="InterPro" id="IPR010921">
    <property type="entry name" value="Trp_repressor/repl_initiator"/>
</dbReference>
<dbReference type="NCBIfam" id="TIGR00362">
    <property type="entry name" value="DnaA"/>
    <property type="match status" value="1"/>
</dbReference>
<dbReference type="PANTHER" id="PTHR30050">
    <property type="entry name" value="CHROMOSOMAL REPLICATION INITIATOR PROTEIN DNAA"/>
    <property type="match status" value="1"/>
</dbReference>
<dbReference type="PANTHER" id="PTHR30050:SF2">
    <property type="entry name" value="CHROMOSOMAL REPLICATION INITIATOR PROTEIN DNAA"/>
    <property type="match status" value="1"/>
</dbReference>
<dbReference type="Pfam" id="PF00308">
    <property type="entry name" value="Bac_DnaA"/>
    <property type="match status" value="1"/>
</dbReference>
<dbReference type="Pfam" id="PF08299">
    <property type="entry name" value="Bac_DnaA_C"/>
    <property type="match status" value="1"/>
</dbReference>
<dbReference type="Pfam" id="PF11638">
    <property type="entry name" value="DnaA_N"/>
    <property type="match status" value="1"/>
</dbReference>
<dbReference type="PRINTS" id="PR00051">
    <property type="entry name" value="DNAA"/>
</dbReference>
<dbReference type="SMART" id="SM00382">
    <property type="entry name" value="AAA"/>
    <property type="match status" value="1"/>
</dbReference>
<dbReference type="SMART" id="SM00760">
    <property type="entry name" value="Bac_DnaA_C"/>
    <property type="match status" value="1"/>
</dbReference>
<dbReference type="SUPFAM" id="SSF52540">
    <property type="entry name" value="P-loop containing nucleoside triphosphate hydrolases"/>
    <property type="match status" value="1"/>
</dbReference>
<dbReference type="SUPFAM" id="SSF48295">
    <property type="entry name" value="TrpR-like"/>
    <property type="match status" value="1"/>
</dbReference>
<dbReference type="PROSITE" id="PS01008">
    <property type="entry name" value="DNAA"/>
    <property type="match status" value="1"/>
</dbReference>
<comment type="function">
    <text evidence="1">Plays an essential role in the initiation and regulation of chromosomal replication. ATP-DnaA binds to the origin of replication (oriC) to initiate formation of the DNA replication initiation complex once per cell cycle. Binds the DnaA box (a 9 base pair repeat at the origin) and separates the double-stranded (ds)DNA. Forms a right-handed helical filament on oriC DNA; dsDNA binds to the exterior of the filament while single-stranded (ss)DNA is stabiized in the filament's interior. The ATP-DnaA-oriC complex binds and stabilizes one strand of the AT-rich DNA unwinding element (DUE), permitting loading of DNA polymerase. After initiation quickly degrades to an ADP-DnaA complex that is not apt for DNA replication. Binds acidic phospholipids.</text>
</comment>
<comment type="subunit">
    <text evidence="1">Oligomerizes as a right-handed, spiral filament on DNA at oriC.</text>
</comment>
<comment type="subcellular location">
    <subcellularLocation>
        <location evidence="1">Cytoplasm</location>
    </subcellularLocation>
</comment>
<comment type="domain">
    <text evidence="1">Domain I is involved in oligomerization and binding regulators, domain II is flexibile and of varying length in different bacteria, domain III forms the AAA+ region, while domain IV binds dsDNA.</text>
</comment>
<comment type="similarity">
    <text evidence="1">Belongs to the DnaA family.</text>
</comment>
<protein>
    <recommendedName>
        <fullName evidence="1">Chromosomal replication initiator protein DnaA</fullName>
    </recommendedName>
</protein>
<reference key="1">
    <citation type="journal article" date="2009" name="PLoS ONE">
        <title>Complete genome sequence of Francisella tularensis subspecies holarctica FTNF002-00.</title>
        <authorList>
            <person name="Barabote R.D."/>
            <person name="Xie G."/>
            <person name="Brettin T.S."/>
            <person name="Hinrichs S.H."/>
            <person name="Fey P.D."/>
            <person name="Jay J.J."/>
            <person name="Engle J.L."/>
            <person name="Godbole S.D."/>
            <person name="Noronha J.M."/>
            <person name="Scheuermann R.H."/>
            <person name="Zhou L.W."/>
            <person name="Lion C."/>
            <person name="Dempsey M.P."/>
        </authorList>
    </citation>
    <scope>NUCLEOTIDE SEQUENCE [LARGE SCALE GENOMIC DNA]</scope>
    <source>
        <strain>FTNF002-00 / FTA</strain>
    </source>
</reference>
<name>DNAA_FRATF</name>
<keyword id="KW-0067">ATP-binding</keyword>
<keyword id="KW-0963">Cytoplasm</keyword>
<keyword id="KW-0235">DNA replication</keyword>
<keyword id="KW-0238">DNA-binding</keyword>
<keyword id="KW-0446">Lipid-binding</keyword>
<keyword id="KW-0547">Nucleotide-binding</keyword>
<feature type="chain" id="PRO_1000079950" description="Chromosomal replication initiator protein DnaA">
    <location>
        <begin position="1"/>
        <end position="491"/>
    </location>
</feature>
<feature type="region of interest" description="Domain I, interacts with DnaA modulators" evidence="1">
    <location>
        <begin position="1"/>
        <end position="69"/>
    </location>
</feature>
<feature type="region of interest" description="Domain II" evidence="1">
    <location>
        <begin position="69"/>
        <end position="154"/>
    </location>
</feature>
<feature type="region of interest" description="Domain III, AAA+ region" evidence="1">
    <location>
        <begin position="155"/>
        <end position="371"/>
    </location>
</feature>
<feature type="region of interest" description="Domain IV, binds dsDNA" evidence="1">
    <location>
        <begin position="372"/>
        <end position="491"/>
    </location>
</feature>
<feature type="binding site" evidence="1">
    <location>
        <position position="199"/>
    </location>
    <ligand>
        <name>ATP</name>
        <dbReference type="ChEBI" id="CHEBI:30616"/>
    </ligand>
</feature>
<feature type="binding site" evidence="1">
    <location>
        <position position="201"/>
    </location>
    <ligand>
        <name>ATP</name>
        <dbReference type="ChEBI" id="CHEBI:30616"/>
    </ligand>
</feature>
<feature type="binding site" evidence="1">
    <location>
        <position position="202"/>
    </location>
    <ligand>
        <name>ATP</name>
        <dbReference type="ChEBI" id="CHEBI:30616"/>
    </ligand>
</feature>
<feature type="binding site" evidence="1">
    <location>
        <position position="203"/>
    </location>
    <ligand>
        <name>ATP</name>
        <dbReference type="ChEBI" id="CHEBI:30616"/>
    </ligand>
</feature>
<accession>A7N926</accession>
<sequence length="491" mass="55814">MTTWDKCLKKIKKNLSTFEYKTWIKPIHVEQNSNLFTVYCNNEYFKKHIKSKYGNLILSTIQECHGNDLIIEYSNKKFSGEKITEVITAGPQANFFSTTSVEIKDESEDTKVVQEPKISKKSNSKDFSSSQELFGFDEAMLITAKEDEEYSFGLPLKEKYVFDSFVVGDANKIARAAAMQVSINPGKLHNPLFIYGGSGLGKTHLMQAIGNHAREVNPNAKIIYTNSEQFIKDYVNSIRLQDQDEFQRVYRSADILLIDDIQFIAGKEGTAQEFFHTFNALYENGKQIILTSDKYPNEIEGLEERLVSRFGYGLTVSVDMPDLETRIAILLKKAHDLGQKLPNETAAFIAENVRTNVRELEGALNRVLTTSKFNHKDPTIEVAQACLRDVIKIQEKKVKIDNIQKVVADFYRIRVKDLTSNQRSRNIARPRQIAMSLARELTSHSLPEIGNAFGGRDHTTVMHAVKAITKLRQSNTSISDDYELLLDKISR</sequence>
<evidence type="ECO:0000255" key="1">
    <source>
        <dbReference type="HAMAP-Rule" id="MF_00377"/>
    </source>
</evidence>
<proteinExistence type="inferred from homology"/>
<gene>
    <name evidence="1" type="primary">dnaA</name>
    <name type="ordered locus">FTA_0001</name>
</gene>